<gene>
    <name type="primary">petJ</name>
</gene>
<sequence>SADLALGKQTFEANCAACHAGGNNSVIPDHTLRKAAMEQFLQGGFNLEAITYQVENGKGAMPAWSGTLDDDEIAAVAAYVYDQASGDKW</sequence>
<proteinExistence type="evidence at protein level"/>
<feature type="chain" id="PRO_0000208680" description="Cytochrome c6">
    <location>
        <begin position="1"/>
        <end position="89"/>
    </location>
</feature>
<feature type="binding site" description="covalent">
    <location>
        <position position="15"/>
    </location>
    <ligand>
        <name>heme c</name>
        <dbReference type="ChEBI" id="CHEBI:61717"/>
    </ligand>
</feature>
<feature type="binding site" description="covalent">
    <location>
        <position position="18"/>
    </location>
    <ligand>
        <name>heme c</name>
        <dbReference type="ChEBI" id="CHEBI:61717"/>
    </ligand>
</feature>
<feature type="binding site" description="axial binding residue">
    <location>
        <position position="19"/>
    </location>
    <ligand>
        <name>heme c</name>
        <dbReference type="ChEBI" id="CHEBI:61717"/>
    </ligand>
    <ligandPart>
        <name>Fe</name>
        <dbReference type="ChEBI" id="CHEBI:18248"/>
    </ligandPart>
</feature>
<feature type="binding site" description="axial binding residue">
    <location>
        <position position="61"/>
    </location>
    <ligand>
        <name>heme c</name>
        <dbReference type="ChEBI" id="CHEBI:61717"/>
    </ligand>
    <ligandPart>
        <name>Fe</name>
        <dbReference type="ChEBI" id="CHEBI:18248"/>
    </ligandPart>
</feature>
<feature type="helix" evidence="2">
    <location>
        <begin position="4"/>
        <end position="14"/>
    </location>
</feature>
<feature type="helix" evidence="2">
    <location>
        <begin position="16"/>
        <end position="19"/>
    </location>
</feature>
<feature type="helix" evidence="2">
    <location>
        <begin position="20"/>
        <end position="22"/>
    </location>
</feature>
<feature type="strand" evidence="2">
    <location>
        <begin position="25"/>
        <end position="27"/>
    </location>
</feature>
<feature type="helix" evidence="2">
    <location>
        <begin position="34"/>
        <end position="40"/>
    </location>
</feature>
<feature type="helix" evidence="2">
    <location>
        <begin position="47"/>
        <end position="56"/>
    </location>
</feature>
<feature type="turn" evidence="2">
    <location>
        <begin position="65"/>
        <end position="67"/>
    </location>
</feature>
<feature type="helix" evidence="2">
    <location>
        <begin position="70"/>
        <end position="85"/>
    </location>
</feature>
<comment type="function">
    <text>Functions as an electron carrier between membrane-bound cytochrome b6-f and photosystem I in oxygenic photosynthesis.</text>
</comment>
<comment type="subunit">
    <text>Monomer.</text>
</comment>
<comment type="subcellular location">
    <subcellularLocation>
        <location>Plastid</location>
        <location>Chloroplast thylakoid lumen</location>
    </subcellularLocation>
</comment>
<comment type="PTM">
    <text>Binds 1 heme c group covalently per subunit.</text>
</comment>
<comment type="similarity">
    <text evidence="1">Belongs to the cytochrome c family. PetJ subfamily.</text>
</comment>
<organism>
    <name type="scientific">Tetradesmus obliquus</name>
    <name type="common">Green alga</name>
    <name type="synonym">Acutodesmus obliquus</name>
    <dbReference type="NCBI Taxonomy" id="3088"/>
    <lineage>
        <taxon>Eukaryota</taxon>
        <taxon>Viridiplantae</taxon>
        <taxon>Chlorophyta</taxon>
        <taxon>core chlorophytes</taxon>
        <taxon>Chlorophyceae</taxon>
        <taxon>CS clade</taxon>
        <taxon>Sphaeropleales</taxon>
        <taxon>Scenedesmaceae</taxon>
        <taxon>Tetradesmus</taxon>
    </lineage>
</organism>
<protein>
    <recommendedName>
        <fullName>Cytochrome c6</fullName>
    </recommendedName>
    <alternativeName>
        <fullName>Cytochrome c-553</fullName>
    </alternativeName>
    <alternativeName>
        <fullName>Cytochrome c553</fullName>
    </alternativeName>
    <alternativeName>
        <fullName>Soluble cytochrome f</fullName>
    </alternativeName>
</protein>
<dbReference type="PIR" id="S77923">
    <property type="entry name" value="S77923"/>
</dbReference>
<dbReference type="PDB" id="1C6O">
    <property type="method" value="X-ray"/>
    <property type="resolution" value="2.00 A"/>
    <property type="chains" value="A/B=1-89"/>
</dbReference>
<dbReference type="PDB" id="1C6R">
    <property type="method" value="X-ray"/>
    <property type="resolution" value="1.90 A"/>
    <property type="chains" value="A=1-89"/>
</dbReference>
<dbReference type="PDBsum" id="1C6O"/>
<dbReference type="PDBsum" id="1C6R"/>
<dbReference type="SMR" id="P57736"/>
<dbReference type="EvolutionaryTrace" id="P57736"/>
<dbReference type="GO" id="GO:0009543">
    <property type="term" value="C:chloroplast thylakoid lumen"/>
    <property type="evidence" value="ECO:0007669"/>
    <property type="project" value="UniProtKB-SubCell"/>
</dbReference>
<dbReference type="GO" id="GO:0009055">
    <property type="term" value="F:electron transfer activity"/>
    <property type="evidence" value="ECO:0007669"/>
    <property type="project" value="InterPro"/>
</dbReference>
<dbReference type="GO" id="GO:0020037">
    <property type="term" value="F:heme binding"/>
    <property type="evidence" value="ECO:0007669"/>
    <property type="project" value="InterPro"/>
</dbReference>
<dbReference type="GO" id="GO:0005506">
    <property type="term" value="F:iron ion binding"/>
    <property type="evidence" value="ECO:0007669"/>
    <property type="project" value="InterPro"/>
</dbReference>
<dbReference type="GO" id="GO:0015979">
    <property type="term" value="P:photosynthesis"/>
    <property type="evidence" value="ECO:0007669"/>
    <property type="project" value="UniProtKB-KW"/>
</dbReference>
<dbReference type="Gene3D" id="1.10.760.10">
    <property type="entry name" value="Cytochrome c-like domain"/>
    <property type="match status" value="1"/>
</dbReference>
<dbReference type="InterPro" id="IPR009056">
    <property type="entry name" value="Cyt_c-like_dom"/>
</dbReference>
<dbReference type="InterPro" id="IPR036909">
    <property type="entry name" value="Cyt_c-like_dom_sf"/>
</dbReference>
<dbReference type="InterPro" id="IPR023655">
    <property type="entry name" value="Cyt_C6"/>
</dbReference>
<dbReference type="InterPro" id="IPR008168">
    <property type="entry name" value="Cyt_C_IC"/>
</dbReference>
<dbReference type="PANTHER" id="PTHR34688">
    <property type="entry name" value="CYTOCHROME C6, CHLOROPLASTIC"/>
    <property type="match status" value="1"/>
</dbReference>
<dbReference type="PANTHER" id="PTHR34688:SF2">
    <property type="entry name" value="CYTOCHROME C6, CHLOROPLASTIC"/>
    <property type="match status" value="1"/>
</dbReference>
<dbReference type="Pfam" id="PF13442">
    <property type="entry name" value="Cytochrome_CBB3"/>
    <property type="match status" value="1"/>
</dbReference>
<dbReference type="PRINTS" id="PR00605">
    <property type="entry name" value="CYTCHROMECIC"/>
</dbReference>
<dbReference type="SUPFAM" id="SSF46626">
    <property type="entry name" value="Cytochrome c"/>
    <property type="match status" value="1"/>
</dbReference>
<dbReference type="PROSITE" id="PS51007">
    <property type="entry name" value="CYTC"/>
    <property type="match status" value="1"/>
</dbReference>
<name>CYC6_TETOB</name>
<evidence type="ECO:0000305" key="1"/>
<evidence type="ECO:0007829" key="2">
    <source>
        <dbReference type="PDB" id="1C6R"/>
    </source>
</evidence>
<accession>P57736</accession>
<reference key="1">
    <citation type="journal article" date="1999" name="J. Mol. Biol.">
        <title>Amino acid sequence, crystallization and structure determination of reduced and oxidized cytochrome c6 from the green alga Scenedesmus obliquus.</title>
        <authorList>
            <person name="Schnackenberg J."/>
            <person name="Than M.E."/>
            <person name="Mann K."/>
            <person name="Wiegand G."/>
            <person name="Huber R."/>
            <person name="Reuter W."/>
        </authorList>
    </citation>
    <scope>PROTEIN SEQUENCE</scope>
    <scope>X-RAY CRYSTALLOGRAPHY (2.0 ANGSTROMS)</scope>
    <source>
        <strain>D3</strain>
    </source>
</reference>
<keyword id="KW-0002">3D-structure</keyword>
<keyword id="KW-0150">Chloroplast</keyword>
<keyword id="KW-0903">Direct protein sequencing</keyword>
<keyword id="KW-0249">Electron transport</keyword>
<keyword id="KW-0349">Heme</keyword>
<keyword id="KW-0408">Iron</keyword>
<keyword id="KW-0479">Metal-binding</keyword>
<keyword id="KW-0602">Photosynthesis</keyword>
<keyword id="KW-0934">Plastid</keyword>
<keyword id="KW-0793">Thylakoid</keyword>
<keyword id="KW-0813">Transport</keyword>